<name>CINA_CLOAB</name>
<organism>
    <name type="scientific">Clostridium acetobutylicum (strain ATCC 824 / DSM 792 / JCM 1419 / IAM 19013 / LMG 5710 / NBRC 13948 / NRRL B-527 / VKM B-1787 / 2291 / W)</name>
    <dbReference type="NCBI Taxonomy" id="272562"/>
    <lineage>
        <taxon>Bacteria</taxon>
        <taxon>Bacillati</taxon>
        <taxon>Bacillota</taxon>
        <taxon>Clostridia</taxon>
        <taxon>Eubacteriales</taxon>
        <taxon>Clostridiaceae</taxon>
        <taxon>Clostridium</taxon>
    </lineage>
</organism>
<gene>
    <name evidence="1" type="primary">cinA</name>
    <name type="ordered locus">CA_C3586</name>
</gene>
<comment type="similarity">
    <text evidence="1">Belongs to the CinA family.</text>
</comment>
<protein>
    <recommendedName>
        <fullName evidence="1">Putative competence-damage inducible protein</fullName>
    </recommendedName>
</protein>
<feature type="chain" id="PRO_0000156754" description="Putative competence-damage inducible protein">
    <location>
        <begin position="1"/>
        <end position="411"/>
    </location>
</feature>
<keyword id="KW-1185">Reference proteome</keyword>
<sequence length="411" mass="45069">MKVEILCVGTELLLGDILNTNAQFLAKEFGAMGFSMYHQAVVGDNVERLKREFELAINRADIVVTTGGLGPTDDDLTKETAAEYFNKKLIFHKESYDEIVKFFNKIGKEISENNKKQAYFPEGCTILKNDHGTAPGCIIDENDKVVILLPGPPREIIPMFRNYVIPYLRKYQEGTIVSKVLRVCGIGESGAAEMLKDLIDNQTNPTIAPYAKDNEVTFRITAKAESEEVAMKLIEPMERKVRERLKENVYGVGDTSLEDVLGAMLIEKKLTIATAESCTGGLLSGRLINYPGISEVFMEGAVTYSNEAKMNRLGVKKETLESYGAVSSETAAEMAKGIAKTAGTNIGVSTTGVAGPGGGTKEKPVGLVYVGLCINGKVKTRKLNMPGDRQTVRNRVVNAVIDWIRREIINL</sequence>
<evidence type="ECO:0000255" key="1">
    <source>
        <dbReference type="HAMAP-Rule" id="MF_00226"/>
    </source>
</evidence>
<proteinExistence type="inferred from homology"/>
<dbReference type="EMBL" id="AE001437">
    <property type="protein sequence ID" value="AAK81509.1"/>
    <property type="molecule type" value="Genomic_DNA"/>
</dbReference>
<dbReference type="PIR" id="B97340">
    <property type="entry name" value="B97340"/>
</dbReference>
<dbReference type="RefSeq" id="NP_350169.1">
    <property type="nucleotide sequence ID" value="NC_003030.1"/>
</dbReference>
<dbReference type="RefSeq" id="WP_010966849.1">
    <property type="nucleotide sequence ID" value="NC_003030.1"/>
</dbReference>
<dbReference type="SMR" id="Q97D94"/>
<dbReference type="STRING" id="272562.CA_C3586"/>
<dbReference type="KEGG" id="cac:CA_C3586"/>
<dbReference type="PATRIC" id="fig|272562.8.peg.3775"/>
<dbReference type="eggNOG" id="COG1058">
    <property type="taxonomic scope" value="Bacteria"/>
</dbReference>
<dbReference type="eggNOG" id="COG1546">
    <property type="taxonomic scope" value="Bacteria"/>
</dbReference>
<dbReference type="HOGENOM" id="CLU_030805_9_3_9"/>
<dbReference type="OrthoDB" id="9801454at2"/>
<dbReference type="Proteomes" id="UP000000814">
    <property type="component" value="Chromosome"/>
</dbReference>
<dbReference type="CDD" id="cd00885">
    <property type="entry name" value="cinA"/>
    <property type="match status" value="1"/>
</dbReference>
<dbReference type="Gene3D" id="3.30.70.2860">
    <property type="match status" value="1"/>
</dbReference>
<dbReference type="Gene3D" id="3.90.950.20">
    <property type="entry name" value="CinA-like"/>
    <property type="match status" value="1"/>
</dbReference>
<dbReference type="Gene3D" id="3.40.980.10">
    <property type="entry name" value="MoaB/Mog-like domain"/>
    <property type="match status" value="1"/>
</dbReference>
<dbReference type="HAMAP" id="MF_00226_B">
    <property type="entry name" value="CinA_B"/>
    <property type="match status" value="1"/>
</dbReference>
<dbReference type="InterPro" id="IPR050101">
    <property type="entry name" value="CinA"/>
</dbReference>
<dbReference type="InterPro" id="IPR036653">
    <property type="entry name" value="CinA-like_C"/>
</dbReference>
<dbReference type="InterPro" id="IPR008136">
    <property type="entry name" value="CinA_C"/>
</dbReference>
<dbReference type="InterPro" id="IPR041424">
    <property type="entry name" value="CinA_KH"/>
</dbReference>
<dbReference type="InterPro" id="IPR008135">
    <property type="entry name" value="Competence-induced_CinA"/>
</dbReference>
<dbReference type="InterPro" id="IPR036425">
    <property type="entry name" value="MoaB/Mog-like_dom_sf"/>
</dbReference>
<dbReference type="InterPro" id="IPR001453">
    <property type="entry name" value="MoaB/Mog_dom"/>
</dbReference>
<dbReference type="NCBIfam" id="TIGR00200">
    <property type="entry name" value="cinA_nterm"/>
    <property type="match status" value="1"/>
</dbReference>
<dbReference type="NCBIfam" id="TIGR00177">
    <property type="entry name" value="molyb_syn"/>
    <property type="match status" value="1"/>
</dbReference>
<dbReference type="NCBIfam" id="TIGR00199">
    <property type="entry name" value="PncC_domain"/>
    <property type="match status" value="1"/>
</dbReference>
<dbReference type="NCBIfam" id="NF001813">
    <property type="entry name" value="PRK00549.1"/>
    <property type="match status" value="1"/>
</dbReference>
<dbReference type="PANTHER" id="PTHR13939">
    <property type="entry name" value="NICOTINAMIDE-NUCLEOTIDE AMIDOHYDROLASE PNCC"/>
    <property type="match status" value="1"/>
</dbReference>
<dbReference type="PANTHER" id="PTHR13939:SF0">
    <property type="entry name" value="NMN AMIDOHYDROLASE-LIKE PROTEIN YFAY"/>
    <property type="match status" value="1"/>
</dbReference>
<dbReference type="Pfam" id="PF02464">
    <property type="entry name" value="CinA"/>
    <property type="match status" value="1"/>
</dbReference>
<dbReference type="Pfam" id="PF18146">
    <property type="entry name" value="CinA_KH"/>
    <property type="match status" value="1"/>
</dbReference>
<dbReference type="Pfam" id="PF00994">
    <property type="entry name" value="MoCF_biosynth"/>
    <property type="match status" value="1"/>
</dbReference>
<dbReference type="PIRSF" id="PIRSF006728">
    <property type="entry name" value="CinA"/>
    <property type="match status" value="1"/>
</dbReference>
<dbReference type="SMART" id="SM00852">
    <property type="entry name" value="MoCF_biosynth"/>
    <property type="match status" value="1"/>
</dbReference>
<dbReference type="SUPFAM" id="SSF142433">
    <property type="entry name" value="CinA-like"/>
    <property type="match status" value="1"/>
</dbReference>
<dbReference type="SUPFAM" id="SSF53218">
    <property type="entry name" value="Molybdenum cofactor biosynthesis proteins"/>
    <property type="match status" value="1"/>
</dbReference>
<reference key="1">
    <citation type="journal article" date="2001" name="J. Bacteriol.">
        <title>Genome sequence and comparative analysis of the solvent-producing bacterium Clostridium acetobutylicum.</title>
        <authorList>
            <person name="Noelling J."/>
            <person name="Breton G."/>
            <person name="Omelchenko M.V."/>
            <person name="Makarova K.S."/>
            <person name="Zeng Q."/>
            <person name="Gibson R."/>
            <person name="Lee H.M."/>
            <person name="Dubois J."/>
            <person name="Qiu D."/>
            <person name="Hitti J."/>
            <person name="Wolf Y.I."/>
            <person name="Tatusov R.L."/>
            <person name="Sabathe F."/>
            <person name="Doucette-Stamm L.A."/>
            <person name="Soucaille P."/>
            <person name="Daly M.J."/>
            <person name="Bennett G.N."/>
            <person name="Koonin E.V."/>
            <person name="Smith D.R."/>
        </authorList>
    </citation>
    <scope>NUCLEOTIDE SEQUENCE [LARGE SCALE GENOMIC DNA]</scope>
    <source>
        <strain>ATCC 824 / DSM 792 / JCM 1419 / IAM 19013 / LMG 5710 / NBRC 13948 / NRRL B-527 / VKM B-1787 / 2291 / W</strain>
    </source>
</reference>
<accession>Q97D94</accession>